<comment type="function">
    <text evidence="1">Removes the formyl group from the N-terminal Met of newly synthesized proteins. Requires at least a dipeptide for an efficient rate of reaction. N-terminal L-methionine is a prerequisite for activity but the enzyme has broad specificity at other positions.</text>
</comment>
<comment type="catalytic activity">
    <reaction evidence="1">
        <text>N-terminal N-formyl-L-methionyl-[peptide] + H2O = N-terminal L-methionyl-[peptide] + formate</text>
        <dbReference type="Rhea" id="RHEA:24420"/>
        <dbReference type="Rhea" id="RHEA-COMP:10639"/>
        <dbReference type="Rhea" id="RHEA-COMP:10640"/>
        <dbReference type="ChEBI" id="CHEBI:15377"/>
        <dbReference type="ChEBI" id="CHEBI:15740"/>
        <dbReference type="ChEBI" id="CHEBI:49298"/>
        <dbReference type="ChEBI" id="CHEBI:64731"/>
        <dbReference type="EC" id="3.5.1.88"/>
    </reaction>
</comment>
<comment type="cofactor">
    <cofactor evidence="1">
        <name>Fe(2+)</name>
        <dbReference type="ChEBI" id="CHEBI:29033"/>
    </cofactor>
    <text evidence="1">Binds 1 Fe(2+) ion.</text>
</comment>
<comment type="similarity">
    <text evidence="1">Belongs to the polypeptide deformylase family.</text>
</comment>
<feature type="chain" id="PRO_0000082770" description="Peptide deformylase 2">
    <location>
        <begin position="1"/>
        <end position="155"/>
    </location>
</feature>
<feature type="active site" evidence="1">
    <location>
        <position position="133"/>
    </location>
</feature>
<feature type="binding site" evidence="1">
    <location>
        <position position="90"/>
    </location>
    <ligand>
        <name>Fe cation</name>
        <dbReference type="ChEBI" id="CHEBI:24875"/>
    </ligand>
</feature>
<feature type="binding site" evidence="1">
    <location>
        <position position="132"/>
    </location>
    <ligand>
        <name>Fe cation</name>
        <dbReference type="ChEBI" id="CHEBI:24875"/>
    </ligand>
</feature>
<feature type="binding site" evidence="1">
    <location>
        <position position="136"/>
    </location>
    <ligand>
        <name>Fe cation</name>
        <dbReference type="ChEBI" id="CHEBI:24875"/>
    </ligand>
</feature>
<proteinExistence type="inferred from homology"/>
<accession>Q8XJX0</accession>
<keyword id="KW-0378">Hydrolase</keyword>
<keyword id="KW-0408">Iron</keyword>
<keyword id="KW-0479">Metal-binding</keyword>
<keyword id="KW-0648">Protein biosynthesis</keyword>
<keyword id="KW-1185">Reference proteome</keyword>
<sequence length="155" mass="17505">MAVKKIVQIGHEALKKVSEPVKDVNEVKGLIQDLKDTLATVEGIGLAAPQIAVNKRVVYINFGDGENEYVLINPEVTGVSKETYEDYEGCLSYVMHEGLVERPRAVRIQALNEKGELKVYEAQDLLARCFLHEIDHLEGIMYVDRAKEMYELVEK</sequence>
<gene>
    <name evidence="1" type="primary">def2</name>
    <name type="ordered locus">CPE1633</name>
</gene>
<reference key="1">
    <citation type="journal article" date="2002" name="Proc. Natl. Acad. Sci. U.S.A.">
        <title>Complete genome sequence of Clostridium perfringens, an anaerobic flesh-eater.</title>
        <authorList>
            <person name="Shimizu T."/>
            <person name="Ohtani K."/>
            <person name="Hirakawa H."/>
            <person name="Ohshima K."/>
            <person name="Yamashita A."/>
            <person name="Shiba T."/>
            <person name="Ogasawara N."/>
            <person name="Hattori M."/>
            <person name="Kuhara S."/>
            <person name="Hayashi H."/>
        </authorList>
    </citation>
    <scope>NUCLEOTIDE SEQUENCE [LARGE SCALE GENOMIC DNA]</scope>
    <source>
        <strain>13 / Type A</strain>
    </source>
</reference>
<evidence type="ECO:0000255" key="1">
    <source>
        <dbReference type="HAMAP-Rule" id="MF_00163"/>
    </source>
</evidence>
<name>DEF2_CLOPE</name>
<dbReference type="EC" id="3.5.1.88" evidence="1"/>
<dbReference type="EMBL" id="BA000016">
    <property type="protein sequence ID" value="BAB81339.1"/>
    <property type="molecule type" value="Genomic_DNA"/>
</dbReference>
<dbReference type="SMR" id="Q8XJX0"/>
<dbReference type="STRING" id="195102.gene:10490897"/>
<dbReference type="KEGG" id="cpe:CPE1633"/>
<dbReference type="HOGENOM" id="CLU_061901_2_0_9"/>
<dbReference type="Proteomes" id="UP000000818">
    <property type="component" value="Chromosome"/>
</dbReference>
<dbReference type="GO" id="GO:0046872">
    <property type="term" value="F:metal ion binding"/>
    <property type="evidence" value="ECO:0007669"/>
    <property type="project" value="UniProtKB-KW"/>
</dbReference>
<dbReference type="GO" id="GO:0042586">
    <property type="term" value="F:peptide deformylase activity"/>
    <property type="evidence" value="ECO:0007669"/>
    <property type="project" value="UniProtKB-UniRule"/>
</dbReference>
<dbReference type="GO" id="GO:0043686">
    <property type="term" value="P:co-translational protein modification"/>
    <property type="evidence" value="ECO:0007669"/>
    <property type="project" value="TreeGrafter"/>
</dbReference>
<dbReference type="GO" id="GO:0006412">
    <property type="term" value="P:translation"/>
    <property type="evidence" value="ECO:0007669"/>
    <property type="project" value="UniProtKB-UniRule"/>
</dbReference>
<dbReference type="CDD" id="cd00487">
    <property type="entry name" value="Pep_deformylase"/>
    <property type="match status" value="1"/>
</dbReference>
<dbReference type="Gene3D" id="3.90.45.10">
    <property type="entry name" value="Peptide deformylase"/>
    <property type="match status" value="1"/>
</dbReference>
<dbReference type="HAMAP" id="MF_00163">
    <property type="entry name" value="Pep_deformylase"/>
    <property type="match status" value="1"/>
</dbReference>
<dbReference type="InterPro" id="IPR023635">
    <property type="entry name" value="Peptide_deformylase"/>
</dbReference>
<dbReference type="InterPro" id="IPR036821">
    <property type="entry name" value="Peptide_deformylase_sf"/>
</dbReference>
<dbReference type="NCBIfam" id="TIGR00079">
    <property type="entry name" value="pept_deformyl"/>
    <property type="match status" value="1"/>
</dbReference>
<dbReference type="NCBIfam" id="NF001159">
    <property type="entry name" value="PRK00150.1-3"/>
    <property type="match status" value="1"/>
</dbReference>
<dbReference type="PANTHER" id="PTHR10458">
    <property type="entry name" value="PEPTIDE DEFORMYLASE"/>
    <property type="match status" value="1"/>
</dbReference>
<dbReference type="PANTHER" id="PTHR10458:SF22">
    <property type="entry name" value="PEPTIDE DEFORMYLASE"/>
    <property type="match status" value="1"/>
</dbReference>
<dbReference type="Pfam" id="PF01327">
    <property type="entry name" value="Pep_deformylase"/>
    <property type="match status" value="1"/>
</dbReference>
<dbReference type="PIRSF" id="PIRSF004749">
    <property type="entry name" value="Pep_def"/>
    <property type="match status" value="1"/>
</dbReference>
<dbReference type="PRINTS" id="PR01576">
    <property type="entry name" value="PDEFORMYLASE"/>
</dbReference>
<dbReference type="SUPFAM" id="SSF56420">
    <property type="entry name" value="Peptide deformylase"/>
    <property type="match status" value="1"/>
</dbReference>
<protein>
    <recommendedName>
        <fullName evidence="1">Peptide deformylase 2</fullName>
        <shortName evidence="1">PDF 2</shortName>
        <ecNumber evidence="1">3.5.1.88</ecNumber>
    </recommendedName>
    <alternativeName>
        <fullName evidence="1">Polypeptide deformylase 2</fullName>
    </alternativeName>
</protein>
<organism>
    <name type="scientific">Clostridium perfringens (strain 13 / Type A)</name>
    <dbReference type="NCBI Taxonomy" id="195102"/>
    <lineage>
        <taxon>Bacteria</taxon>
        <taxon>Bacillati</taxon>
        <taxon>Bacillota</taxon>
        <taxon>Clostridia</taxon>
        <taxon>Eubacteriales</taxon>
        <taxon>Clostridiaceae</taxon>
        <taxon>Clostridium</taxon>
    </lineage>
</organism>